<name>CXE15_ARATH</name>
<accession>Q9FG13</accession>
<reference key="1">
    <citation type="submission" date="2000-07" db="EMBL/GenBank/DDBJ databases">
        <title>Structural analysis of Arabidopsis thaliana chromosome 5. XI.</title>
        <authorList>
            <person name="Kaneko T."/>
            <person name="Katoh T."/>
            <person name="Asamizu E."/>
            <person name="Sato S."/>
            <person name="Nakamura Y."/>
            <person name="Kotani H."/>
            <person name="Tabata S."/>
        </authorList>
    </citation>
    <scope>NUCLEOTIDE SEQUENCE [LARGE SCALE GENOMIC DNA]</scope>
    <source>
        <strain>cv. Columbia</strain>
    </source>
</reference>
<reference key="2">
    <citation type="journal article" date="2017" name="Plant J.">
        <title>Araport11: a complete reannotation of the Arabidopsis thaliana reference genome.</title>
        <authorList>
            <person name="Cheng C.Y."/>
            <person name="Krishnakumar V."/>
            <person name="Chan A.P."/>
            <person name="Thibaud-Nissen F."/>
            <person name="Schobel S."/>
            <person name="Town C.D."/>
        </authorList>
    </citation>
    <scope>GENOME REANNOTATION</scope>
    <source>
        <strain>cv. Columbia</strain>
    </source>
</reference>
<reference key="3">
    <citation type="journal article" date="2002" name="Science">
        <title>Functional annotation of a full-length Arabidopsis cDNA collection.</title>
        <authorList>
            <person name="Seki M."/>
            <person name="Narusaka M."/>
            <person name="Kamiya A."/>
            <person name="Ishida J."/>
            <person name="Satou M."/>
            <person name="Sakurai T."/>
            <person name="Nakajima M."/>
            <person name="Enju A."/>
            <person name="Akiyama K."/>
            <person name="Oono Y."/>
            <person name="Muramatsu M."/>
            <person name="Hayashizaki Y."/>
            <person name="Kawai J."/>
            <person name="Carninci P."/>
            <person name="Itoh M."/>
            <person name="Ishii Y."/>
            <person name="Arakawa T."/>
            <person name="Shibata K."/>
            <person name="Shinagawa A."/>
            <person name="Shinozaki K."/>
        </authorList>
    </citation>
    <scope>NUCLEOTIDE SEQUENCE [LARGE SCALE MRNA]</scope>
    <source>
        <strain>cv. Columbia</strain>
    </source>
</reference>
<reference key="4">
    <citation type="journal article" date="2003" name="Science">
        <title>Empirical analysis of transcriptional activity in the Arabidopsis genome.</title>
        <authorList>
            <person name="Yamada K."/>
            <person name="Lim J."/>
            <person name="Dale J.M."/>
            <person name="Chen H."/>
            <person name="Shinn P."/>
            <person name="Palm C.J."/>
            <person name="Southwick A.M."/>
            <person name="Wu H.C."/>
            <person name="Kim C.J."/>
            <person name="Nguyen M."/>
            <person name="Pham P.K."/>
            <person name="Cheuk R.F."/>
            <person name="Karlin-Newmann G."/>
            <person name="Liu S.X."/>
            <person name="Lam B."/>
            <person name="Sakano H."/>
            <person name="Wu T."/>
            <person name="Yu G."/>
            <person name="Miranda M."/>
            <person name="Quach H.L."/>
            <person name="Tripp M."/>
            <person name="Chang C.H."/>
            <person name="Lee J.M."/>
            <person name="Toriumi M.J."/>
            <person name="Chan M.M."/>
            <person name="Tang C.C."/>
            <person name="Onodera C.S."/>
            <person name="Deng J.M."/>
            <person name="Akiyama K."/>
            <person name="Ansari Y."/>
            <person name="Arakawa T."/>
            <person name="Banh J."/>
            <person name="Banno F."/>
            <person name="Bowser L."/>
            <person name="Brooks S.Y."/>
            <person name="Carninci P."/>
            <person name="Chao Q."/>
            <person name="Choy N."/>
            <person name="Enju A."/>
            <person name="Goldsmith A.D."/>
            <person name="Gurjal M."/>
            <person name="Hansen N.F."/>
            <person name="Hayashizaki Y."/>
            <person name="Johnson-Hopson C."/>
            <person name="Hsuan V.W."/>
            <person name="Iida K."/>
            <person name="Karnes M."/>
            <person name="Khan S."/>
            <person name="Koesema E."/>
            <person name="Ishida J."/>
            <person name="Jiang P.X."/>
            <person name="Jones T."/>
            <person name="Kawai J."/>
            <person name="Kamiya A."/>
            <person name="Meyers C."/>
            <person name="Nakajima M."/>
            <person name="Narusaka M."/>
            <person name="Seki M."/>
            <person name="Sakurai T."/>
            <person name="Satou M."/>
            <person name="Tamse R."/>
            <person name="Vaysberg M."/>
            <person name="Wallender E.K."/>
            <person name="Wong C."/>
            <person name="Yamamura Y."/>
            <person name="Yuan S."/>
            <person name="Shinozaki K."/>
            <person name="Davis R.W."/>
            <person name="Theologis A."/>
            <person name="Ecker J.R."/>
        </authorList>
    </citation>
    <scope>NUCLEOTIDE SEQUENCE [LARGE SCALE MRNA]</scope>
    <source>
        <strain>cv. Columbia</strain>
    </source>
</reference>
<reference key="5">
    <citation type="journal article" date="2003" name="J. Mol. Evol.">
        <title>The carboxylesterase gene family from Arabidopsis thaliana.</title>
        <authorList>
            <person name="Marshall S.D."/>
            <person name="Putterill J.J."/>
            <person name="Plummer K.M."/>
            <person name="Newcomb R.D."/>
        </authorList>
    </citation>
    <scope>TISSUE SPECIFICITY</scope>
    <scope>GENE FAMILY</scope>
    <scope>NOMENCLATURE</scope>
</reference>
<reference key="6">
    <citation type="journal article" date="2021" name="Nat. Plants">
        <title>Catabolism of strigolactones by a carboxylesterase.</title>
        <authorList>
            <person name="Xu E."/>
            <person name="Chai L."/>
            <person name="Zhang S."/>
            <person name="Yu R."/>
            <person name="Zhang X."/>
            <person name="Xu C."/>
            <person name="Hu Y."/>
        </authorList>
    </citation>
    <scope>FUNCTION</scope>
    <scope>DISRUPTION PHENOTYPE</scope>
    <scope>CATALYTIC ACTIVITY</scope>
    <scope>INDUCTION DURING EXPLANTS REGENERATION</scope>
    <scope>TISSUE SPECIFICITY</scope>
    <scope>SUBCELLULAR LOCATION</scope>
    <source>
        <strain>cv. Columbia</strain>
    </source>
</reference>
<reference key="7">
    <citation type="journal article" date="2024" name="Nat. Commun.">
        <title>Structural insights into strigolactone catabolism by carboxylesterases reveal a conserved conformational regulation.</title>
        <authorList>
            <person name="Palayam M."/>
            <person name="Yan L."/>
            <person name="Nagalakshmi U."/>
            <person name="Gilio A.K."/>
            <person name="Cornu D."/>
            <person name="Boyer F.D."/>
            <person name="Dinesh-Kumar S.P."/>
            <person name="Shabek N."/>
        </authorList>
    </citation>
    <scope>X-RAY CRYSTALLOGRAPHY (2.30 ANGSTROMS) IN COMPLEX WITH SUBSTRATE ANALOG</scope>
    <scope>FUNCTION</scope>
    <scope>MUTAGENESIS OF SER-169 AND GLU-271</scope>
</reference>
<dbReference type="EC" id="3.1.1.-" evidence="3"/>
<dbReference type="EMBL" id="AP002543">
    <property type="protein sequence ID" value="BAB11406.1"/>
    <property type="molecule type" value="Genomic_DNA"/>
</dbReference>
<dbReference type="EMBL" id="CP002688">
    <property type="protein sequence ID" value="AED91035.1"/>
    <property type="molecule type" value="Genomic_DNA"/>
</dbReference>
<dbReference type="EMBL" id="CP002688">
    <property type="protein sequence ID" value="AED91036.1"/>
    <property type="molecule type" value="Genomic_DNA"/>
</dbReference>
<dbReference type="EMBL" id="AK118580">
    <property type="protein sequence ID" value="BAC43180.1"/>
    <property type="molecule type" value="mRNA"/>
</dbReference>
<dbReference type="EMBL" id="BT008350">
    <property type="protein sequence ID" value="AAP37709.1"/>
    <property type="molecule type" value="mRNA"/>
</dbReference>
<dbReference type="RefSeq" id="NP_196275.1">
    <property type="nucleotide sequence ID" value="NM_120740.3"/>
</dbReference>
<dbReference type="RefSeq" id="NP_850782.1">
    <property type="nucleotide sequence ID" value="NM_180451.2"/>
</dbReference>
<dbReference type="PDB" id="8VCA">
    <property type="method" value="X-ray"/>
    <property type="resolution" value="2.30 A"/>
    <property type="chains" value="A=1-329"/>
</dbReference>
<dbReference type="PDB" id="8VCD">
    <property type="method" value="X-ray"/>
    <property type="resolution" value="2.32 A"/>
    <property type="chains" value="A=1-329"/>
</dbReference>
<dbReference type="PDBsum" id="8VCA"/>
<dbReference type="PDBsum" id="8VCD"/>
<dbReference type="SMR" id="Q9FG13"/>
<dbReference type="BioGRID" id="15824">
    <property type="interactions" value="1"/>
</dbReference>
<dbReference type="FunCoup" id="Q9FG13">
    <property type="interactions" value="132"/>
</dbReference>
<dbReference type="IntAct" id="Q9FG13">
    <property type="interactions" value="1"/>
</dbReference>
<dbReference type="STRING" id="3702.Q9FG13"/>
<dbReference type="ESTHER" id="arath-CXE15">
    <property type="family name" value="Plant_carboxylesterase"/>
</dbReference>
<dbReference type="GlyGen" id="Q9FG13">
    <property type="glycosylation" value="1 site"/>
</dbReference>
<dbReference type="PaxDb" id="3702-AT5G06570.2"/>
<dbReference type="ProteomicsDB" id="220433"/>
<dbReference type="EnsemblPlants" id="AT5G06570.1">
    <property type="protein sequence ID" value="AT5G06570.1"/>
    <property type="gene ID" value="AT5G06570"/>
</dbReference>
<dbReference type="EnsemblPlants" id="AT5G06570.2">
    <property type="protein sequence ID" value="AT5G06570.2"/>
    <property type="gene ID" value="AT5G06570"/>
</dbReference>
<dbReference type="GeneID" id="830545"/>
<dbReference type="Gramene" id="AT5G06570.1">
    <property type="protein sequence ID" value="AT5G06570.1"/>
    <property type="gene ID" value="AT5G06570"/>
</dbReference>
<dbReference type="Gramene" id="AT5G06570.2">
    <property type="protein sequence ID" value="AT5G06570.2"/>
    <property type="gene ID" value="AT5G06570"/>
</dbReference>
<dbReference type="KEGG" id="ath:AT5G06570"/>
<dbReference type="Araport" id="AT5G06570"/>
<dbReference type="TAIR" id="AT5G06570"/>
<dbReference type="eggNOG" id="KOG1515">
    <property type="taxonomic scope" value="Eukaryota"/>
</dbReference>
<dbReference type="HOGENOM" id="CLU_012494_22_1_1"/>
<dbReference type="InParanoid" id="Q9FG13"/>
<dbReference type="OMA" id="FFIVEPW"/>
<dbReference type="OrthoDB" id="408631at2759"/>
<dbReference type="PhylomeDB" id="Q9FG13"/>
<dbReference type="PRO" id="PR:Q9FG13"/>
<dbReference type="Proteomes" id="UP000006548">
    <property type="component" value="Chromosome 5"/>
</dbReference>
<dbReference type="ExpressionAtlas" id="Q9FG13">
    <property type="expression patterns" value="baseline and differential"/>
</dbReference>
<dbReference type="GO" id="GO:0005829">
    <property type="term" value="C:cytosol"/>
    <property type="evidence" value="ECO:0000314"/>
    <property type="project" value="UniProtKB"/>
</dbReference>
<dbReference type="GO" id="GO:0005634">
    <property type="term" value="C:nucleus"/>
    <property type="evidence" value="ECO:0000314"/>
    <property type="project" value="UniProtKB"/>
</dbReference>
<dbReference type="GO" id="GO:0106435">
    <property type="term" value="F:carboxylesterase activity"/>
    <property type="evidence" value="ECO:0007669"/>
    <property type="project" value="UniProtKB-EC"/>
</dbReference>
<dbReference type="GO" id="GO:2000032">
    <property type="term" value="P:regulation of secondary shoot formation"/>
    <property type="evidence" value="ECO:0000315"/>
    <property type="project" value="UniProtKB"/>
</dbReference>
<dbReference type="GO" id="GO:1901600">
    <property type="term" value="P:strigolactone metabolic process"/>
    <property type="evidence" value="ECO:0000315"/>
    <property type="project" value="UniProtKB"/>
</dbReference>
<dbReference type="Gene3D" id="3.40.50.1820">
    <property type="entry name" value="alpha/beta hydrolase"/>
    <property type="match status" value="1"/>
</dbReference>
<dbReference type="InterPro" id="IPR013094">
    <property type="entry name" value="AB_hydrolase_3"/>
</dbReference>
<dbReference type="InterPro" id="IPR029058">
    <property type="entry name" value="AB_hydrolase_fold"/>
</dbReference>
<dbReference type="InterPro" id="IPR050466">
    <property type="entry name" value="Carboxylest/Gibb_receptor"/>
</dbReference>
<dbReference type="PANTHER" id="PTHR23024">
    <property type="entry name" value="ARYLACETAMIDE DEACETYLASE"/>
    <property type="match status" value="1"/>
</dbReference>
<dbReference type="PANTHER" id="PTHR23024:SF406">
    <property type="entry name" value="CARBOXYLESTERASE 15-RELATED"/>
    <property type="match status" value="1"/>
</dbReference>
<dbReference type="Pfam" id="PF07859">
    <property type="entry name" value="Abhydrolase_3"/>
    <property type="match status" value="1"/>
</dbReference>
<dbReference type="SUPFAM" id="SSF53474">
    <property type="entry name" value="alpha/beta-Hydrolases"/>
    <property type="match status" value="1"/>
</dbReference>
<gene>
    <name evidence="5" type="primary">CXE15</name>
    <name evidence="9" type="ordered locus">At5g06570</name>
    <name evidence="10" type="ORF">F15M7.10</name>
</gene>
<comment type="function">
    <text evidence="3 4">Binds to strigolactones (SLs) such as (-)-2'-epi-GR24(4DO), 5-deoxystrigol (5DS) and orobanchol, and catalyzes their hydrolysis; SL are phytohormones controlling shoot branching and communications between plants and microorganisms (PubMed:34764442). Promotes shoot branching by dampening SL-inhibited axillary bud outgrowth (PubMed:34764442, PubMed:39090154).</text>
</comment>
<comment type="catalytic activity">
    <reaction evidence="3">
        <text>(-)-2'-epi-GR24 + H2O = (-)-2'-epi-GR24 ABC-rings + 5-hydroxy-3-methylfuran-2(5H)-one</text>
        <dbReference type="Rhea" id="RHEA:76507"/>
        <dbReference type="ChEBI" id="CHEBI:15377"/>
        <dbReference type="ChEBI" id="CHEBI:195253"/>
        <dbReference type="ChEBI" id="CHEBI:195258"/>
        <dbReference type="ChEBI" id="CHEBI:195259"/>
    </reaction>
    <physiologicalReaction direction="left-to-right" evidence="3">
        <dbReference type="Rhea" id="RHEA:76508"/>
    </physiologicalReaction>
</comment>
<comment type="catalytic activity">
    <reaction evidence="3">
        <text>5-deoxystrigol + H2O = 5-deoxystrigol ABC-rings + 5-hydroxy-3-methylfuran-2(5H)-one</text>
        <dbReference type="Rhea" id="RHEA:76511"/>
        <dbReference type="ChEBI" id="CHEBI:15377"/>
        <dbReference type="ChEBI" id="CHEBI:81465"/>
        <dbReference type="ChEBI" id="CHEBI:81466"/>
        <dbReference type="ChEBI" id="CHEBI:195253"/>
    </reaction>
    <physiologicalReaction direction="left-to-right" evidence="3">
        <dbReference type="Rhea" id="RHEA:76512"/>
    </physiologicalReaction>
</comment>
<comment type="catalytic activity">
    <reaction evidence="3">
        <text>orobanchol + H2O = orobanchol ABC-rings + 5-hydroxy-3-methylfuran-2(5H)-one</text>
        <dbReference type="Rhea" id="RHEA:76515"/>
        <dbReference type="ChEBI" id="CHEBI:15377"/>
        <dbReference type="ChEBI" id="CHEBI:195253"/>
        <dbReference type="ChEBI" id="CHEBI:195254"/>
        <dbReference type="ChEBI" id="CHEBI:195257"/>
    </reaction>
    <physiologicalReaction direction="left-to-right" evidence="3">
        <dbReference type="Rhea" id="RHEA:76516"/>
    </physiologicalReaction>
</comment>
<comment type="subcellular location">
    <subcellularLocation>
        <location evidence="3">Nucleus</location>
    </subcellularLocation>
    <subcellularLocation>
        <location evidence="3">Cytoplasm</location>
        <location evidence="3">Cytosol</location>
    </subcellularLocation>
</comment>
<comment type="tissue specificity">
    <text evidence="2 3">Expressed in axillary buds, leaves, stems, hypocotyls, flowers, siliques, and vasculatures of shoots and roots.</text>
</comment>
<comment type="induction">
    <text evidence="3">Up-regulated in root explants but down-regulated in shoot explants on callus-inducing medium (CIM) incubation.</text>
</comment>
<comment type="disruption phenotype">
    <text evidence="3">Normal shoot branching (PubMed:34764442). Reduced hydrolysis of strigolactones (SLs) (PubMed:34764442).</text>
</comment>
<comment type="similarity">
    <text evidence="7">Belongs to the 'GDXG' lipolytic enzyme family.</text>
</comment>
<protein>
    <recommendedName>
        <fullName evidence="6">Strigolactones hydrolase CXE15</fullName>
        <ecNumber evidence="3">3.1.1.-</ecNumber>
    </recommendedName>
    <alternativeName>
        <fullName evidence="5">Carboxylesterase 15</fullName>
        <shortName evidence="5">AtCXE15</shortName>
    </alternativeName>
</protein>
<organism>
    <name type="scientific">Arabidopsis thaliana</name>
    <name type="common">Mouse-ear cress</name>
    <dbReference type="NCBI Taxonomy" id="3702"/>
    <lineage>
        <taxon>Eukaryota</taxon>
        <taxon>Viridiplantae</taxon>
        <taxon>Streptophyta</taxon>
        <taxon>Embryophyta</taxon>
        <taxon>Tracheophyta</taxon>
        <taxon>Spermatophyta</taxon>
        <taxon>Magnoliopsida</taxon>
        <taxon>eudicotyledons</taxon>
        <taxon>Gunneridae</taxon>
        <taxon>Pentapetalae</taxon>
        <taxon>rosids</taxon>
        <taxon>malvids</taxon>
        <taxon>Brassicales</taxon>
        <taxon>Brassicaceae</taxon>
        <taxon>Camelineae</taxon>
        <taxon>Arabidopsis</taxon>
    </lineage>
</organism>
<feature type="chain" id="PRO_0000402559" description="Strigolactones hydrolase CXE15">
    <location>
        <begin position="1"/>
        <end position="329"/>
    </location>
</feature>
<feature type="short sequence motif" description="Involved in the stabilization of the negatively charged intermediate by the formation of the oxyanion hole" evidence="1">
    <location>
        <begin position="83"/>
        <end position="85"/>
    </location>
</feature>
<feature type="active site" description="Nucleophile" evidence="4">
    <location>
        <position position="169"/>
    </location>
</feature>
<feature type="active site" evidence="4">
    <location>
        <position position="271"/>
    </location>
</feature>
<feature type="active site" evidence="1">
    <location>
        <position position="302"/>
    </location>
</feature>
<feature type="binding site" evidence="8 11">
    <location>
        <position position="85"/>
    </location>
    <ligand>
        <name>(-)-2'-epi-GR24</name>
        <dbReference type="ChEBI" id="CHEBI:195258"/>
    </ligand>
</feature>
<feature type="binding site" evidence="8 11">
    <location>
        <position position="86"/>
    </location>
    <ligand>
        <name>(-)-2'-epi-GR24</name>
        <dbReference type="ChEBI" id="CHEBI:195258"/>
    </ligand>
</feature>
<feature type="binding site" evidence="8 11">
    <location>
        <position position="169"/>
    </location>
    <ligand>
        <name>(-)-2'-epi-GR24</name>
        <dbReference type="ChEBI" id="CHEBI:195258"/>
    </ligand>
</feature>
<feature type="binding site" evidence="8 11">
    <location>
        <position position="170"/>
    </location>
    <ligand>
        <name>(-)-2'-epi-GR24</name>
        <dbReference type="ChEBI" id="CHEBI:195258"/>
    </ligand>
</feature>
<feature type="mutagenesis site" description="Abolishes the hydrolysis of the synthetic pro-fluorescent probe Yoshimulactone Green (YLG), commonly used for the measurement of SL hydrolysis." evidence="4">
    <original>S</original>
    <variation>A</variation>
    <location>
        <position position="169"/>
    </location>
</feature>
<feature type="mutagenesis site" description="Abolishes the hydrolysis of the synthetic pro-fluorescent probe Yoshimulactone Green (YLG), commonly used for the measurement of SL hydrolysis." evidence="4">
    <original>E</original>
    <variation>A</variation>
    <location>
        <position position="271"/>
    </location>
</feature>
<feature type="helix" evidence="12">
    <location>
        <begin position="10"/>
        <end position="21"/>
    </location>
</feature>
<feature type="strand" evidence="12">
    <location>
        <begin position="31"/>
        <end position="36"/>
    </location>
</feature>
<feature type="strand" evidence="12">
    <location>
        <begin position="43"/>
        <end position="55"/>
    </location>
</feature>
<feature type="turn" evidence="12">
    <location>
        <begin position="56"/>
        <end position="59"/>
    </location>
</feature>
<feature type="strand" evidence="12">
    <location>
        <begin position="60"/>
        <end position="67"/>
    </location>
</feature>
<feature type="helix" evidence="12">
    <location>
        <begin position="68"/>
        <end position="71"/>
    </location>
</feature>
<feature type="strand" evidence="12">
    <location>
        <begin position="76"/>
        <end position="82"/>
    </location>
</feature>
<feature type="turn" evidence="12">
    <location>
        <begin position="86"/>
        <end position="88"/>
    </location>
</feature>
<feature type="helix" evidence="12">
    <location>
        <begin position="95"/>
        <end position="108"/>
    </location>
</feature>
<feature type="strand" evidence="12">
    <location>
        <begin position="111"/>
        <end position="115"/>
    </location>
</feature>
<feature type="turn" evidence="12">
    <location>
        <begin position="120"/>
        <end position="122"/>
    </location>
</feature>
<feature type="helix" evidence="12">
    <location>
        <begin position="127"/>
        <end position="144"/>
    </location>
</feature>
<feature type="helix" evidence="12">
    <location>
        <begin position="147"/>
        <end position="150"/>
    </location>
</feature>
<feature type="strand" evidence="12">
    <location>
        <begin position="151"/>
        <end position="154"/>
    </location>
</feature>
<feature type="strand" evidence="12">
    <location>
        <begin position="158"/>
        <end position="168"/>
    </location>
</feature>
<feature type="helix" evidence="12">
    <location>
        <begin position="170"/>
        <end position="183"/>
    </location>
</feature>
<feature type="strand" evidence="12">
    <location>
        <begin position="194"/>
        <end position="201"/>
    </location>
</feature>
<feature type="turn" evidence="12">
    <location>
        <begin position="211"/>
        <end position="214"/>
    </location>
</feature>
<feature type="helix" evidence="12">
    <location>
        <begin position="223"/>
        <end position="233"/>
    </location>
</feature>
<feature type="turn" evidence="12">
    <location>
        <begin position="243"/>
        <end position="245"/>
    </location>
</feature>
<feature type="turn" evidence="12">
    <location>
        <begin position="255"/>
        <end position="257"/>
    </location>
</feature>
<feature type="strand" evidence="12">
    <location>
        <begin position="263"/>
        <end position="268"/>
    </location>
</feature>
<feature type="helix" evidence="12">
    <location>
        <begin position="274"/>
        <end position="285"/>
    </location>
</feature>
<feature type="strand" evidence="12">
    <location>
        <begin position="287"/>
        <end position="289"/>
    </location>
</feature>
<feature type="strand" evidence="12">
    <location>
        <begin position="292"/>
        <end position="297"/>
    </location>
</feature>
<feature type="helix" evidence="12">
    <location>
        <begin position="304"/>
        <end position="307"/>
    </location>
</feature>
<feature type="helix" evidence="12">
    <location>
        <begin position="312"/>
        <end position="327"/>
    </location>
</feature>
<sequence>MGSLGEEPQVAEDCMGLLQLLSNGTVLRSESIDLITQQIPFKNNQTVLFKDSIYHKPNNLHLRLYKPISASNRTALPVVVFFHGGGFCFGSRSWPHFHNFCLTLASSLNALVVSPDYRLAPEHRLPAAFEDAEAVLTWLWDQAVSDGVNHWFEDGTDVDFDRVFVVGDSSGGNIAHQLAVRFGSGSIELTPVRVRGYVLMGPFFGGEERTNSENGPSEALLSLDLLDKFWRLSLPNGATRDHHMANPFGPTSPTLESISLEPMLVIVGGSELLRDRAKEYAYKLKKMGGKRVDYIEFENKEHGFYSNYPSSEAAEQVLRIIGDFMNNLS</sequence>
<keyword id="KW-0002">3D-structure</keyword>
<keyword id="KW-0963">Cytoplasm</keyword>
<keyword id="KW-0378">Hydrolase</keyword>
<keyword id="KW-0539">Nucleus</keyword>
<keyword id="KW-1185">Reference proteome</keyword>
<keyword id="KW-0719">Serine esterase</keyword>
<proteinExistence type="evidence at protein level"/>
<evidence type="ECO:0000250" key="1">
    <source>
        <dbReference type="UniProtKB" id="Q5NUF3"/>
    </source>
</evidence>
<evidence type="ECO:0000269" key="2">
    <source>
    </source>
</evidence>
<evidence type="ECO:0000269" key="3">
    <source>
    </source>
</evidence>
<evidence type="ECO:0000269" key="4">
    <source>
    </source>
</evidence>
<evidence type="ECO:0000303" key="5">
    <source>
    </source>
</evidence>
<evidence type="ECO:0000303" key="6">
    <source>
    </source>
</evidence>
<evidence type="ECO:0000305" key="7"/>
<evidence type="ECO:0000305" key="8">
    <source>
    </source>
</evidence>
<evidence type="ECO:0000312" key="9">
    <source>
        <dbReference type="Araport" id="AT5G06570"/>
    </source>
</evidence>
<evidence type="ECO:0000312" key="10">
    <source>
        <dbReference type="EMBL" id="BAB11406.1"/>
    </source>
</evidence>
<evidence type="ECO:0007744" key="11">
    <source>
        <dbReference type="PDB" id="8VCD"/>
    </source>
</evidence>
<evidence type="ECO:0007829" key="12">
    <source>
        <dbReference type="PDB" id="8VCA"/>
    </source>
</evidence>